<protein>
    <recommendedName>
        <fullName evidence="1">Segregation and condensation protein B</fullName>
    </recommendedName>
</protein>
<keyword id="KW-0131">Cell cycle</keyword>
<keyword id="KW-0132">Cell division</keyword>
<keyword id="KW-0159">Chromosome partition</keyword>
<keyword id="KW-0963">Cytoplasm</keyword>
<feature type="chain" id="PRO_1000187530" description="Segregation and condensation protein B">
    <location>
        <begin position="1"/>
        <end position="190"/>
    </location>
</feature>
<dbReference type="EMBL" id="CP001177">
    <property type="protein sequence ID" value="ACJ81260.1"/>
    <property type="molecule type" value="Genomic_DNA"/>
</dbReference>
<dbReference type="SMR" id="B7HN35"/>
<dbReference type="KEGG" id="bcr:BCAH187_A4188"/>
<dbReference type="HOGENOM" id="CLU_045647_5_3_9"/>
<dbReference type="Proteomes" id="UP000002214">
    <property type="component" value="Chromosome"/>
</dbReference>
<dbReference type="GO" id="GO:0005737">
    <property type="term" value="C:cytoplasm"/>
    <property type="evidence" value="ECO:0007669"/>
    <property type="project" value="UniProtKB-SubCell"/>
</dbReference>
<dbReference type="GO" id="GO:0051301">
    <property type="term" value="P:cell division"/>
    <property type="evidence" value="ECO:0007669"/>
    <property type="project" value="UniProtKB-KW"/>
</dbReference>
<dbReference type="GO" id="GO:0051304">
    <property type="term" value="P:chromosome separation"/>
    <property type="evidence" value="ECO:0007669"/>
    <property type="project" value="InterPro"/>
</dbReference>
<dbReference type="GO" id="GO:0006260">
    <property type="term" value="P:DNA replication"/>
    <property type="evidence" value="ECO:0007669"/>
    <property type="project" value="UniProtKB-UniRule"/>
</dbReference>
<dbReference type="Gene3D" id="1.10.10.10">
    <property type="entry name" value="Winged helix-like DNA-binding domain superfamily/Winged helix DNA-binding domain"/>
    <property type="match status" value="2"/>
</dbReference>
<dbReference type="HAMAP" id="MF_01804">
    <property type="entry name" value="ScpB"/>
    <property type="match status" value="1"/>
</dbReference>
<dbReference type="InterPro" id="IPR005234">
    <property type="entry name" value="ScpB_csome_segregation"/>
</dbReference>
<dbReference type="InterPro" id="IPR036388">
    <property type="entry name" value="WH-like_DNA-bd_sf"/>
</dbReference>
<dbReference type="InterPro" id="IPR036390">
    <property type="entry name" value="WH_DNA-bd_sf"/>
</dbReference>
<dbReference type="NCBIfam" id="TIGR00281">
    <property type="entry name" value="SMC-Scp complex subunit ScpB"/>
    <property type="match status" value="1"/>
</dbReference>
<dbReference type="PANTHER" id="PTHR34298">
    <property type="entry name" value="SEGREGATION AND CONDENSATION PROTEIN B"/>
    <property type="match status" value="1"/>
</dbReference>
<dbReference type="PANTHER" id="PTHR34298:SF2">
    <property type="entry name" value="SEGREGATION AND CONDENSATION PROTEIN B"/>
    <property type="match status" value="1"/>
</dbReference>
<dbReference type="Pfam" id="PF04079">
    <property type="entry name" value="SMC_ScpB"/>
    <property type="match status" value="1"/>
</dbReference>
<dbReference type="PIRSF" id="PIRSF019345">
    <property type="entry name" value="ScpB"/>
    <property type="match status" value="1"/>
</dbReference>
<dbReference type="SUPFAM" id="SSF46785">
    <property type="entry name" value="Winged helix' DNA-binding domain"/>
    <property type="match status" value="2"/>
</dbReference>
<gene>
    <name evidence="1" type="primary">scpB</name>
    <name type="ordered locus">BCAH187_A4188</name>
</gene>
<organism>
    <name type="scientific">Bacillus cereus (strain AH187)</name>
    <dbReference type="NCBI Taxonomy" id="405534"/>
    <lineage>
        <taxon>Bacteria</taxon>
        <taxon>Bacillati</taxon>
        <taxon>Bacillota</taxon>
        <taxon>Bacilli</taxon>
        <taxon>Bacillales</taxon>
        <taxon>Bacillaceae</taxon>
        <taxon>Bacillus</taxon>
        <taxon>Bacillus cereus group</taxon>
    </lineage>
</organism>
<sequence>MDRTEQKSIIEGLLFVSGDEGISPEQIAKVLEIEGNEVINILEEMQKECEGAHRGLQIVQYAKVYRFATKKEHASYYQKLIDIPTAASLSQAALETLAIVAYRQPITRTEMEEIRGVKTDKALQTLVSHLLIKEMGRAEGPGRPILYGTTKEFLDTFGLKTLDDLPPLSEENEQMNEADLFFGSLQEISK</sequence>
<accession>B7HN35</accession>
<reference key="1">
    <citation type="submission" date="2008-10" db="EMBL/GenBank/DDBJ databases">
        <title>Genome sequence of Bacillus cereus AH187.</title>
        <authorList>
            <person name="Dodson R.J."/>
            <person name="Durkin A.S."/>
            <person name="Rosovitz M.J."/>
            <person name="Rasko D.A."/>
            <person name="Kolsto A.B."/>
            <person name="Okstad O.A."/>
            <person name="Ravel J."/>
            <person name="Sutton G."/>
        </authorList>
    </citation>
    <scope>NUCLEOTIDE SEQUENCE [LARGE SCALE GENOMIC DNA]</scope>
    <source>
        <strain>AH187</strain>
    </source>
</reference>
<comment type="function">
    <text evidence="1">Participates in chromosomal partition during cell division. May act via the formation of a condensin-like complex containing Smc and ScpA that pull DNA away from mid-cell into both cell halves.</text>
</comment>
<comment type="subunit">
    <text evidence="1">Homodimer. Homodimerization may be required to stabilize the binding of ScpA to the Smc head domains. Component of a cohesin-like complex composed of ScpA, ScpB and the Smc homodimer, in which ScpA and ScpB bind to the head domain of Smc. The presence of the three proteins is required for the association of the complex with DNA.</text>
</comment>
<comment type="subcellular location">
    <subcellularLocation>
        <location evidence="1">Cytoplasm</location>
    </subcellularLocation>
    <text evidence="1">Associated with two foci at the outer edges of the nucleoid region in young cells, and at four foci within both cell halves in older cells.</text>
</comment>
<comment type="similarity">
    <text evidence="1">Belongs to the ScpB family.</text>
</comment>
<name>SCPB_BACC7</name>
<proteinExistence type="inferred from homology"/>
<evidence type="ECO:0000255" key="1">
    <source>
        <dbReference type="HAMAP-Rule" id="MF_01804"/>
    </source>
</evidence>